<accession>O74822</accession>
<reference key="1">
    <citation type="journal article" date="2002" name="Nature">
        <title>The genome sequence of Schizosaccharomyces pombe.</title>
        <authorList>
            <person name="Wood V."/>
            <person name="Gwilliam R."/>
            <person name="Rajandream M.A."/>
            <person name="Lyne M.H."/>
            <person name="Lyne R."/>
            <person name="Stewart A."/>
            <person name="Sgouros J.G."/>
            <person name="Peat N."/>
            <person name="Hayles J."/>
            <person name="Baker S.G."/>
            <person name="Basham D."/>
            <person name="Bowman S."/>
            <person name="Brooks K."/>
            <person name="Brown D."/>
            <person name="Brown S."/>
            <person name="Chillingworth T."/>
            <person name="Churcher C.M."/>
            <person name="Collins M."/>
            <person name="Connor R."/>
            <person name="Cronin A."/>
            <person name="Davis P."/>
            <person name="Feltwell T."/>
            <person name="Fraser A."/>
            <person name="Gentles S."/>
            <person name="Goble A."/>
            <person name="Hamlin N."/>
            <person name="Harris D.E."/>
            <person name="Hidalgo J."/>
            <person name="Hodgson G."/>
            <person name="Holroyd S."/>
            <person name="Hornsby T."/>
            <person name="Howarth S."/>
            <person name="Huckle E.J."/>
            <person name="Hunt S."/>
            <person name="Jagels K."/>
            <person name="James K.D."/>
            <person name="Jones L."/>
            <person name="Jones M."/>
            <person name="Leather S."/>
            <person name="McDonald S."/>
            <person name="McLean J."/>
            <person name="Mooney P."/>
            <person name="Moule S."/>
            <person name="Mungall K.L."/>
            <person name="Murphy L.D."/>
            <person name="Niblett D."/>
            <person name="Odell C."/>
            <person name="Oliver K."/>
            <person name="O'Neil S."/>
            <person name="Pearson D."/>
            <person name="Quail M.A."/>
            <person name="Rabbinowitsch E."/>
            <person name="Rutherford K.M."/>
            <person name="Rutter S."/>
            <person name="Saunders D."/>
            <person name="Seeger K."/>
            <person name="Sharp S."/>
            <person name="Skelton J."/>
            <person name="Simmonds M.N."/>
            <person name="Squares R."/>
            <person name="Squares S."/>
            <person name="Stevens K."/>
            <person name="Taylor K."/>
            <person name="Taylor R.G."/>
            <person name="Tivey A."/>
            <person name="Walsh S.V."/>
            <person name="Warren T."/>
            <person name="Whitehead S."/>
            <person name="Woodward J.R."/>
            <person name="Volckaert G."/>
            <person name="Aert R."/>
            <person name="Robben J."/>
            <person name="Grymonprez B."/>
            <person name="Weltjens I."/>
            <person name="Vanstreels E."/>
            <person name="Rieger M."/>
            <person name="Schaefer M."/>
            <person name="Mueller-Auer S."/>
            <person name="Gabel C."/>
            <person name="Fuchs M."/>
            <person name="Duesterhoeft A."/>
            <person name="Fritzc C."/>
            <person name="Holzer E."/>
            <person name="Moestl D."/>
            <person name="Hilbert H."/>
            <person name="Borzym K."/>
            <person name="Langer I."/>
            <person name="Beck A."/>
            <person name="Lehrach H."/>
            <person name="Reinhardt R."/>
            <person name="Pohl T.M."/>
            <person name="Eger P."/>
            <person name="Zimmermann W."/>
            <person name="Wedler H."/>
            <person name="Wambutt R."/>
            <person name="Purnelle B."/>
            <person name="Goffeau A."/>
            <person name="Cadieu E."/>
            <person name="Dreano S."/>
            <person name="Gloux S."/>
            <person name="Lelaure V."/>
            <person name="Mottier S."/>
            <person name="Galibert F."/>
            <person name="Aves S.J."/>
            <person name="Xiang Z."/>
            <person name="Hunt C."/>
            <person name="Moore K."/>
            <person name="Hurst S.M."/>
            <person name="Lucas M."/>
            <person name="Rochet M."/>
            <person name="Gaillardin C."/>
            <person name="Tallada V.A."/>
            <person name="Garzon A."/>
            <person name="Thode G."/>
            <person name="Daga R.R."/>
            <person name="Cruzado L."/>
            <person name="Jimenez J."/>
            <person name="Sanchez M."/>
            <person name="del Rey F."/>
            <person name="Benito J."/>
            <person name="Dominguez A."/>
            <person name="Revuelta J.L."/>
            <person name="Moreno S."/>
            <person name="Armstrong J."/>
            <person name="Forsburg S.L."/>
            <person name="Cerutti L."/>
            <person name="Lowe T."/>
            <person name="McCombie W.R."/>
            <person name="Paulsen I."/>
            <person name="Potashkin J."/>
            <person name="Shpakovski G.V."/>
            <person name="Ussery D."/>
            <person name="Barrell B.G."/>
            <person name="Nurse P."/>
        </authorList>
    </citation>
    <scope>NUCLEOTIDE SEQUENCE [LARGE SCALE GENOMIC DNA]</scope>
    <source>
        <strain>972 / ATCC 24843</strain>
    </source>
</reference>
<reference key="2">
    <citation type="journal article" date="2006" name="Nat. Biotechnol.">
        <title>ORFeome cloning and global analysis of protein localization in the fission yeast Schizosaccharomyces pombe.</title>
        <authorList>
            <person name="Matsuyama A."/>
            <person name="Arai R."/>
            <person name="Yashiroda Y."/>
            <person name="Shirai A."/>
            <person name="Kamata A."/>
            <person name="Sekido S."/>
            <person name="Kobayashi Y."/>
            <person name="Hashimoto A."/>
            <person name="Hamamoto M."/>
            <person name="Hiraoka Y."/>
            <person name="Horinouchi S."/>
            <person name="Yoshida M."/>
        </authorList>
    </citation>
    <scope>SUBCELLULAR LOCATION [LARGE SCALE ANALYSIS]</scope>
</reference>
<name>YBJB_SCHPO</name>
<gene>
    <name type="ORF">SPBC337.11</name>
</gene>
<evidence type="ECO:0000269" key="1">
    <source>
    </source>
</evidence>
<evidence type="ECO:0000305" key="2"/>
<comment type="subcellular location">
    <subcellularLocation>
        <location evidence="1">Cytoplasm</location>
    </subcellularLocation>
    <subcellularLocation>
        <location evidence="1">Nucleus</location>
    </subcellularLocation>
</comment>
<comment type="similarity">
    <text evidence="2">Belongs to the zinc-containing alcohol dehydrogenase family. Quinone oxidoreductase subfamily.</text>
</comment>
<organism>
    <name type="scientific">Schizosaccharomyces pombe (strain 972 / ATCC 24843)</name>
    <name type="common">Fission yeast</name>
    <dbReference type="NCBI Taxonomy" id="284812"/>
    <lineage>
        <taxon>Eukaryota</taxon>
        <taxon>Fungi</taxon>
        <taxon>Dikarya</taxon>
        <taxon>Ascomycota</taxon>
        <taxon>Taphrinomycotina</taxon>
        <taxon>Schizosaccharomycetes</taxon>
        <taxon>Schizosaccharomycetales</taxon>
        <taxon>Schizosaccharomycetaceae</taxon>
        <taxon>Schizosaccharomyces</taxon>
    </lineage>
</organism>
<proteinExistence type="inferred from homology"/>
<protein>
    <recommendedName>
        <fullName>Zinc-type alcohol dehydrogenase-like protein C337.11</fullName>
        <ecNumber>1.-.-.-</ecNumber>
    </recommendedName>
</protein>
<keyword id="KW-0963">Cytoplasm</keyword>
<keyword id="KW-0539">Nucleus</keyword>
<keyword id="KW-0560">Oxidoreductase</keyword>
<keyword id="KW-1185">Reference proteome</keyword>
<dbReference type="EC" id="1.-.-.-"/>
<dbReference type="EMBL" id="CU329671">
    <property type="protein sequence ID" value="CAA21281.1"/>
    <property type="molecule type" value="Genomic_DNA"/>
</dbReference>
<dbReference type="PIR" id="T40264">
    <property type="entry name" value="T40264"/>
</dbReference>
<dbReference type="RefSeq" id="NP_595412.1">
    <property type="nucleotide sequence ID" value="NM_001021319.2"/>
</dbReference>
<dbReference type="SMR" id="O74822"/>
<dbReference type="BioGRID" id="277510">
    <property type="interactions" value="5"/>
</dbReference>
<dbReference type="STRING" id="284812.O74822"/>
<dbReference type="PaxDb" id="4896-SPBC337.11.1"/>
<dbReference type="EnsemblFungi" id="SPBC337.11.1">
    <property type="protein sequence ID" value="SPBC337.11.1:pep"/>
    <property type="gene ID" value="SPBC337.11"/>
</dbReference>
<dbReference type="KEGG" id="spo:2540994"/>
<dbReference type="PomBase" id="SPBC337.11"/>
<dbReference type="VEuPathDB" id="FungiDB:SPBC337.11"/>
<dbReference type="eggNOG" id="KOG1198">
    <property type="taxonomic scope" value="Eukaryota"/>
</dbReference>
<dbReference type="HOGENOM" id="CLU_026673_3_1_1"/>
<dbReference type="InParanoid" id="O74822"/>
<dbReference type="OMA" id="MPHAVWP"/>
<dbReference type="PhylomeDB" id="O74822"/>
<dbReference type="PRO" id="PR:O74822"/>
<dbReference type="Proteomes" id="UP000002485">
    <property type="component" value="Chromosome II"/>
</dbReference>
<dbReference type="GO" id="GO:0005737">
    <property type="term" value="C:cytoplasm"/>
    <property type="evidence" value="ECO:0007669"/>
    <property type="project" value="UniProtKB-SubCell"/>
</dbReference>
<dbReference type="GO" id="GO:0005634">
    <property type="term" value="C:nucleus"/>
    <property type="evidence" value="ECO:0007669"/>
    <property type="project" value="UniProtKB-SubCell"/>
</dbReference>
<dbReference type="GO" id="GO:0016616">
    <property type="term" value="F:oxidoreductase activity, acting on the CH-OH group of donors, NAD or NADP as acceptor"/>
    <property type="evidence" value="ECO:0000255"/>
    <property type="project" value="PomBase"/>
</dbReference>
<dbReference type="CDD" id="cd05289">
    <property type="entry name" value="MDR_like_2"/>
    <property type="match status" value="1"/>
</dbReference>
<dbReference type="Gene3D" id="3.90.180.10">
    <property type="entry name" value="Medium-chain alcohol dehydrogenases, catalytic domain"/>
    <property type="match status" value="1"/>
</dbReference>
<dbReference type="InterPro" id="IPR013149">
    <property type="entry name" value="ADH-like_C"/>
</dbReference>
<dbReference type="InterPro" id="IPR013154">
    <property type="entry name" value="ADH-like_N"/>
</dbReference>
<dbReference type="InterPro" id="IPR011032">
    <property type="entry name" value="GroES-like_sf"/>
</dbReference>
<dbReference type="InterPro" id="IPR052585">
    <property type="entry name" value="Lipid_raft_assoc_Zn_ADH"/>
</dbReference>
<dbReference type="InterPro" id="IPR036291">
    <property type="entry name" value="NAD(P)-bd_dom_sf"/>
</dbReference>
<dbReference type="InterPro" id="IPR020843">
    <property type="entry name" value="PKS_ER"/>
</dbReference>
<dbReference type="PANTHER" id="PTHR43482">
    <property type="entry name" value="PROTEIN AST1-RELATED"/>
    <property type="match status" value="1"/>
</dbReference>
<dbReference type="PANTHER" id="PTHR43482:SF1">
    <property type="entry name" value="PROTEIN AST1-RELATED"/>
    <property type="match status" value="1"/>
</dbReference>
<dbReference type="Pfam" id="PF08240">
    <property type="entry name" value="ADH_N"/>
    <property type="match status" value="1"/>
</dbReference>
<dbReference type="Pfam" id="PF00107">
    <property type="entry name" value="ADH_zinc_N"/>
    <property type="match status" value="1"/>
</dbReference>
<dbReference type="SMART" id="SM00829">
    <property type="entry name" value="PKS_ER"/>
    <property type="match status" value="1"/>
</dbReference>
<dbReference type="SUPFAM" id="SSF50129">
    <property type="entry name" value="GroES-like"/>
    <property type="match status" value="1"/>
</dbReference>
<dbReference type="SUPFAM" id="SSF51735">
    <property type="entry name" value="NAD(P)-binding Rossmann-fold domains"/>
    <property type="match status" value="1"/>
</dbReference>
<sequence>MQYYQMMKALRMLKKPKPGCLGIEIQSVPIPQPKNGELLVKIEAAAINPSDLMNATGGFPYTVYPRIVGRDYAGTVISGASHLVGTRVFGTSGSELSFTKDGTHAEYCIIPEKAAVRMPSNLSFTEAASVGVPFTTAYLALSRGETKGSDIVLVVGALGAVGSAVCQIAEDWGCKVITVSRSGSTDINTVVDPELKRVHELVEKVDVVIDTVGDPLLMKSALNQLGIGGRLSYISAPKQGSIEFSYDMKQIYRKNLKIIGCNSLLLSLVESNSLLKNMVAKFEAGKYKVLNKKIAETSLTDECINSYRKLMNECSTKFVITMSTN</sequence>
<feature type="chain" id="PRO_0000339116" description="Zinc-type alcohol dehydrogenase-like protein C337.11">
    <location>
        <begin position="1"/>
        <end position="325"/>
    </location>
</feature>